<dbReference type="EC" id="1.1.1.86" evidence="1"/>
<dbReference type="EMBL" id="CP000932">
    <property type="protein sequence ID" value="ACM64272.1"/>
    <property type="molecule type" value="Genomic_DNA"/>
</dbReference>
<dbReference type="RefSeq" id="WP_012661655.1">
    <property type="nucleotide sequence ID" value="NC_012039.1"/>
</dbReference>
<dbReference type="SMR" id="B9KCI3"/>
<dbReference type="STRING" id="306263.Cla_0948"/>
<dbReference type="KEGG" id="cla:CLA_0948"/>
<dbReference type="eggNOG" id="COG0059">
    <property type="taxonomic scope" value="Bacteria"/>
</dbReference>
<dbReference type="HOGENOM" id="CLU_033821_0_1_7"/>
<dbReference type="UniPathway" id="UPA00047">
    <property type="reaction ID" value="UER00056"/>
</dbReference>
<dbReference type="UniPathway" id="UPA00049">
    <property type="reaction ID" value="UER00060"/>
</dbReference>
<dbReference type="Proteomes" id="UP000007727">
    <property type="component" value="Chromosome"/>
</dbReference>
<dbReference type="GO" id="GO:0005829">
    <property type="term" value="C:cytosol"/>
    <property type="evidence" value="ECO:0007669"/>
    <property type="project" value="TreeGrafter"/>
</dbReference>
<dbReference type="GO" id="GO:0004455">
    <property type="term" value="F:ketol-acid reductoisomerase activity"/>
    <property type="evidence" value="ECO:0007669"/>
    <property type="project" value="UniProtKB-UniRule"/>
</dbReference>
<dbReference type="GO" id="GO:0000287">
    <property type="term" value="F:magnesium ion binding"/>
    <property type="evidence" value="ECO:0007669"/>
    <property type="project" value="UniProtKB-UniRule"/>
</dbReference>
<dbReference type="GO" id="GO:0050661">
    <property type="term" value="F:NADP binding"/>
    <property type="evidence" value="ECO:0007669"/>
    <property type="project" value="InterPro"/>
</dbReference>
<dbReference type="GO" id="GO:0009097">
    <property type="term" value="P:isoleucine biosynthetic process"/>
    <property type="evidence" value="ECO:0007669"/>
    <property type="project" value="UniProtKB-UniRule"/>
</dbReference>
<dbReference type="GO" id="GO:0009099">
    <property type="term" value="P:L-valine biosynthetic process"/>
    <property type="evidence" value="ECO:0007669"/>
    <property type="project" value="UniProtKB-UniRule"/>
</dbReference>
<dbReference type="FunFam" id="3.40.50.720:FF:000023">
    <property type="entry name" value="Ketol-acid reductoisomerase (NADP(+))"/>
    <property type="match status" value="1"/>
</dbReference>
<dbReference type="Gene3D" id="6.10.240.10">
    <property type="match status" value="1"/>
</dbReference>
<dbReference type="Gene3D" id="3.40.50.720">
    <property type="entry name" value="NAD(P)-binding Rossmann-like Domain"/>
    <property type="match status" value="1"/>
</dbReference>
<dbReference type="HAMAP" id="MF_00435">
    <property type="entry name" value="IlvC"/>
    <property type="match status" value="1"/>
</dbReference>
<dbReference type="InterPro" id="IPR008927">
    <property type="entry name" value="6-PGluconate_DH-like_C_sf"/>
</dbReference>
<dbReference type="InterPro" id="IPR013023">
    <property type="entry name" value="KARI"/>
</dbReference>
<dbReference type="InterPro" id="IPR000506">
    <property type="entry name" value="KARI_C"/>
</dbReference>
<dbReference type="InterPro" id="IPR013116">
    <property type="entry name" value="KARI_N"/>
</dbReference>
<dbReference type="InterPro" id="IPR014359">
    <property type="entry name" value="KARI_prok"/>
</dbReference>
<dbReference type="InterPro" id="IPR036291">
    <property type="entry name" value="NAD(P)-bd_dom_sf"/>
</dbReference>
<dbReference type="NCBIfam" id="TIGR00465">
    <property type="entry name" value="ilvC"/>
    <property type="match status" value="1"/>
</dbReference>
<dbReference type="NCBIfam" id="NF004017">
    <property type="entry name" value="PRK05479.1"/>
    <property type="match status" value="1"/>
</dbReference>
<dbReference type="NCBIfam" id="NF009940">
    <property type="entry name" value="PRK13403.1"/>
    <property type="match status" value="1"/>
</dbReference>
<dbReference type="PANTHER" id="PTHR21371">
    <property type="entry name" value="KETOL-ACID REDUCTOISOMERASE, MITOCHONDRIAL"/>
    <property type="match status" value="1"/>
</dbReference>
<dbReference type="PANTHER" id="PTHR21371:SF1">
    <property type="entry name" value="KETOL-ACID REDUCTOISOMERASE, MITOCHONDRIAL"/>
    <property type="match status" value="1"/>
</dbReference>
<dbReference type="Pfam" id="PF01450">
    <property type="entry name" value="KARI_C"/>
    <property type="match status" value="1"/>
</dbReference>
<dbReference type="Pfam" id="PF07991">
    <property type="entry name" value="KARI_N"/>
    <property type="match status" value="1"/>
</dbReference>
<dbReference type="PIRSF" id="PIRSF000116">
    <property type="entry name" value="IlvC_gammaproteo"/>
    <property type="match status" value="1"/>
</dbReference>
<dbReference type="SUPFAM" id="SSF48179">
    <property type="entry name" value="6-phosphogluconate dehydrogenase C-terminal domain-like"/>
    <property type="match status" value="1"/>
</dbReference>
<dbReference type="SUPFAM" id="SSF51735">
    <property type="entry name" value="NAD(P)-binding Rossmann-fold domains"/>
    <property type="match status" value="1"/>
</dbReference>
<dbReference type="PROSITE" id="PS51851">
    <property type="entry name" value="KARI_C"/>
    <property type="match status" value="1"/>
</dbReference>
<dbReference type="PROSITE" id="PS51850">
    <property type="entry name" value="KARI_N"/>
    <property type="match status" value="1"/>
</dbReference>
<evidence type="ECO:0000255" key="1">
    <source>
        <dbReference type="HAMAP-Rule" id="MF_00435"/>
    </source>
</evidence>
<evidence type="ECO:0000255" key="2">
    <source>
        <dbReference type="PROSITE-ProRule" id="PRU01197"/>
    </source>
</evidence>
<evidence type="ECO:0000255" key="3">
    <source>
        <dbReference type="PROSITE-ProRule" id="PRU01198"/>
    </source>
</evidence>
<organism>
    <name type="scientific">Campylobacter lari (strain RM2100 / D67 / ATCC BAA-1060)</name>
    <dbReference type="NCBI Taxonomy" id="306263"/>
    <lineage>
        <taxon>Bacteria</taxon>
        <taxon>Pseudomonadati</taxon>
        <taxon>Campylobacterota</taxon>
        <taxon>Epsilonproteobacteria</taxon>
        <taxon>Campylobacterales</taxon>
        <taxon>Campylobacteraceae</taxon>
        <taxon>Campylobacter</taxon>
    </lineage>
</organism>
<proteinExistence type="inferred from homology"/>
<feature type="chain" id="PRO_1000190925" description="Ketol-acid reductoisomerase (NADP(+))">
    <location>
        <begin position="1"/>
        <end position="340"/>
    </location>
</feature>
<feature type="domain" description="KARI N-terminal Rossmann" evidence="2">
    <location>
        <begin position="3"/>
        <end position="183"/>
    </location>
</feature>
<feature type="domain" description="KARI C-terminal knotted" evidence="3">
    <location>
        <begin position="184"/>
        <end position="329"/>
    </location>
</feature>
<feature type="active site" evidence="1">
    <location>
        <position position="109"/>
    </location>
</feature>
<feature type="binding site" evidence="1">
    <location>
        <begin position="26"/>
        <end position="29"/>
    </location>
    <ligand>
        <name>NADP(+)</name>
        <dbReference type="ChEBI" id="CHEBI:58349"/>
    </ligand>
</feature>
<feature type="binding site" evidence="1">
    <location>
        <position position="49"/>
    </location>
    <ligand>
        <name>NADP(+)</name>
        <dbReference type="ChEBI" id="CHEBI:58349"/>
    </ligand>
</feature>
<feature type="binding site" evidence="1">
    <location>
        <position position="54"/>
    </location>
    <ligand>
        <name>NADP(+)</name>
        <dbReference type="ChEBI" id="CHEBI:58349"/>
    </ligand>
</feature>
<feature type="binding site" evidence="1">
    <location>
        <begin position="84"/>
        <end position="87"/>
    </location>
    <ligand>
        <name>NADP(+)</name>
        <dbReference type="ChEBI" id="CHEBI:58349"/>
    </ligand>
</feature>
<feature type="binding site" evidence="1">
    <location>
        <position position="135"/>
    </location>
    <ligand>
        <name>NADP(+)</name>
        <dbReference type="ChEBI" id="CHEBI:58349"/>
    </ligand>
</feature>
<feature type="binding site" evidence="1">
    <location>
        <position position="192"/>
    </location>
    <ligand>
        <name>Mg(2+)</name>
        <dbReference type="ChEBI" id="CHEBI:18420"/>
        <label>1</label>
    </ligand>
</feature>
<feature type="binding site" evidence="1">
    <location>
        <position position="192"/>
    </location>
    <ligand>
        <name>Mg(2+)</name>
        <dbReference type="ChEBI" id="CHEBI:18420"/>
        <label>2</label>
    </ligand>
</feature>
<feature type="binding site" evidence="1">
    <location>
        <position position="196"/>
    </location>
    <ligand>
        <name>Mg(2+)</name>
        <dbReference type="ChEBI" id="CHEBI:18420"/>
        <label>1</label>
    </ligand>
</feature>
<feature type="binding site" evidence="1">
    <location>
        <position position="228"/>
    </location>
    <ligand>
        <name>Mg(2+)</name>
        <dbReference type="ChEBI" id="CHEBI:18420"/>
        <label>2</label>
    </ligand>
</feature>
<feature type="binding site" evidence="1">
    <location>
        <position position="232"/>
    </location>
    <ligand>
        <name>Mg(2+)</name>
        <dbReference type="ChEBI" id="CHEBI:18420"/>
        <label>2</label>
    </ligand>
</feature>
<feature type="binding site" evidence="1">
    <location>
        <position position="253"/>
    </location>
    <ligand>
        <name>substrate</name>
    </ligand>
</feature>
<sequence length="340" mass="37276">MAVSIYYDKDCDINLIKSKKVAIIGFGSQGHAHAMNLRDSGVEVIIGLKEGGQSWAKAQKANFIVKSVKEATKEADLIMILAPDEIQSEIFNEEIKPELKAGKTLAFAHGFNIHYGQIVAPKGIDVIMIAPKAPGHTVRHEFSIGGGTPCLIAIHQDESKNAKNLALSYASAIGGGRTGIIETTFKAETETDLFGEQAVLCGGLSALIQAGFETLVEAGYEPEMAYFECLHEMKLIVDLIYQGGIADMRYSVSNTAEYGDYITGPKIITKETKEAMKGVLKDIQNGSFAKDFILERRANFARMHAERKLMNDSLIEKTGRELRAMMPWISAKKLVDKDKN</sequence>
<keyword id="KW-0028">Amino-acid biosynthesis</keyword>
<keyword id="KW-0100">Branched-chain amino acid biosynthesis</keyword>
<keyword id="KW-0460">Magnesium</keyword>
<keyword id="KW-0479">Metal-binding</keyword>
<keyword id="KW-0521">NADP</keyword>
<keyword id="KW-0560">Oxidoreductase</keyword>
<keyword id="KW-1185">Reference proteome</keyword>
<comment type="function">
    <text evidence="1">Involved in the biosynthesis of branched-chain amino acids (BCAA). Catalyzes an alkyl-migration followed by a ketol-acid reduction of (S)-2-acetolactate (S2AL) to yield (R)-2,3-dihydroxy-isovalerate. In the isomerase reaction, S2AL is rearranged via a Mg-dependent methyl migration to produce 3-hydroxy-3-methyl-2-ketobutyrate (HMKB). In the reductase reaction, this 2-ketoacid undergoes a metal-dependent reduction by NADPH to yield (R)-2,3-dihydroxy-isovalerate.</text>
</comment>
<comment type="catalytic activity">
    <reaction evidence="1">
        <text>(2R)-2,3-dihydroxy-3-methylbutanoate + NADP(+) = (2S)-2-acetolactate + NADPH + H(+)</text>
        <dbReference type="Rhea" id="RHEA:22068"/>
        <dbReference type="ChEBI" id="CHEBI:15378"/>
        <dbReference type="ChEBI" id="CHEBI:49072"/>
        <dbReference type="ChEBI" id="CHEBI:57783"/>
        <dbReference type="ChEBI" id="CHEBI:58349"/>
        <dbReference type="ChEBI" id="CHEBI:58476"/>
        <dbReference type="EC" id="1.1.1.86"/>
    </reaction>
</comment>
<comment type="catalytic activity">
    <reaction evidence="1">
        <text>(2R,3R)-2,3-dihydroxy-3-methylpentanoate + NADP(+) = (S)-2-ethyl-2-hydroxy-3-oxobutanoate + NADPH + H(+)</text>
        <dbReference type="Rhea" id="RHEA:13493"/>
        <dbReference type="ChEBI" id="CHEBI:15378"/>
        <dbReference type="ChEBI" id="CHEBI:49256"/>
        <dbReference type="ChEBI" id="CHEBI:49258"/>
        <dbReference type="ChEBI" id="CHEBI:57783"/>
        <dbReference type="ChEBI" id="CHEBI:58349"/>
        <dbReference type="EC" id="1.1.1.86"/>
    </reaction>
</comment>
<comment type="cofactor">
    <cofactor evidence="1">
        <name>Mg(2+)</name>
        <dbReference type="ChEBI" id="CHEBI:18420"/>
    </cofactor>
    <text evidence="1">Binds 2 magnesium ions per subunit.</text>
</comment>
<comment type="pathway">
    <text evidence="1">Amino-acid biosynthesis; L-isoleucine biosynthesis; L-isoleucine from 2-oxobutanoate: step 2/4.</text>
</comment>
<comment type="pathway">
    <text evidence="1">Amino-acid biosynthesis; L-valine biosynthesis; L-valine from pyruvate: step 2/4.</text>
</comment>
<comment type="similarity">
    <text evidence="1">Belongs to the ketol-acid reductoisomerase family.</text>
</comment>
<gene>
    <name evidence="1" type="primary">ilvC</name>
    <name type="ordered locus">Cla_0948</name>
</gene>
<reference key="1">
    <citation type="journal article" date="2008" name="Foodborne Pathog. Dis.">
        <title>The complete genome sequence and analysis of the human pathogen Campylobacter lari.</title>
        <authorList>
            <person name="Miller W.G."/>
            <person name="Wang G."/>
            <person name="Binnewies T.T."/>
            <person name="Parker C.T."/>
        </authorList>
    </citation>
    <scope>NUCLEOTIDE SEQUENCE [LARGE SCALE GENOMIC DNA]</scope>
    <source>
        <strain>RM2100 / D67 / ATCC BAA-1060</strain>
    </source>
</reference>
<protein>
    <recommendedName>
        <fullName evidence="1">Ketol-acid reductoisomerase (NADP(+))</fullName>
        <shortName evidence="1">KARI</shortName>
        <ecNumber evidence="1">1.1.1.86</ecNumber>
    </recommendedName>
    <alternativeName>
        <fullName evidence="1">Acetohydroxy-acid isomeroreductase</fullName>
        <shortName evidence="1">AHIR</shortName>
    </alternativeName>
    <alternativeName>
        <fullName evidence="1">Alpha-keto-beta-hydroxylacyl reductoisomerase</fullName>
    </alternativeName>
    <alternativeName>
        <fullName evidence="1">Ketol-acid reductoisomerase type 1</fullName>
    </alternativeName>
    <alternativeName>
        <fullName evidence="1">Ketol-acid reductoisomerase type I</fullName>
    </alternativeName>
</protein>
<name>ILVC_CAMLR</name>
<accession>B9KCI3</accession>